<keyword id="KW-0031">Aminopeptidase</keyword>
<keyword id="KW-0170">Cobalt</keyword>
<keyword id="KW-0903">Direct protein sequencing</keyword>
<keyword id="KW-0378">Hydrolase</keyword>
<keyword id="KW-0479">Metal-binding</keyword>
<keyword id="KW-0482">Metalloprotease</keyword>
<keyword id="KW-0645">Protease</keyword>
<keyword id="KW-0862">Zinc</keyword>
<proteinExistence type="evidence at protein level"/>
<name>AMP2_GEOSE</name>
<organism>
    <name type="scientific">Geobacillus stearothermophilus</name>
    <name type="common">Bacillus stearothermophilus</name>
    <dbReference type="NCBI Taxonomy" id="1422"/>
    <lineage>
        <taxon>Bacteria</taxon>
        <taxon>Bacillati</taxon>
        <taxon>Bacillota</taxon>
        <taxon>Bacilli</taxon>
        <taxon>Bacillales</taxon>
        <taxon>Anoxybacillaceae</taxon>
        <taxon>Geobacillus</taxon>
    </lineage>
</organism>
<accession>P24828</accession>
<sequence length="413" mass="46210">MNRWEKELDKYAELAVKVGVNIQPGQTLFVNAPLEAAPLVRKIAKTAYETGAKHVYFEWNDEALTYIKFHHAPEEAFSEYPMLRARAMEELAEQGAAFLSIHAPNPDLLKDVDPKRIATANKTAAQALANYRSAIMADRNCWSLISVPTPAWAQKVFGDLRDEEAIDKLWEAIFRITRIDQDDPIAAWREHNDRLARIVDYLNNKQYKQLVYEAPGPIFTVELVDGHVWHGGAATSQSGVRFNPNIPTEEVFTMPHKDGVNGTVRNTKPLNYNGNVIDGFTLTFKDGQVVDFSAEQGYETLKHLLDTDDGARRLGEVALVPHQSPVSLSNLIFYNTLFDENAACHLALGKAYPTNIENGASLSKEELDRRGVNDSLVHVDFMIGSADLNIDGVTKDGKREPIFRSGNWAFELA</sequence>
<dbReference type="EC" id="3.4.11.-" evidence="2"/>
<dbReference type="EMBL" id="D13385">
    <property type="protein sequence ID" value="BAA02653.1"/>
    <property type="molecule type" value="Genomic_DNA"/>
</dbReference>
<dbReference type="PIR" id="JC5863">
    <property type="entry name" value="JC5863"/>
</dbReference>
<dbReference type="SMR" id="P24828"/>
<dbReference type="MEROPS" id="M29.002"/>
<dbReference type="BRENDA" id="3.4.11.10">
    <property type="organism ID" value="623"/>
</dbReference>
<dbReference type="GO" id="GO:0004177">
    <property type="term" value="F:aminopeptidase activity"/>
    <property type="evidence" value="ECO:0007669"/>
    <property type="project" value="UniProtKB-KW"/>
</dbReference>
<dbReference type="GO" id="GO:0046872">
    <property type="term" value="F:metal ion binding"/>
    <property type="evidence" value="ECO:0007669"/>
    <property type="project" value="UniProtKB-KW"/>
</dbReference>
<dbReference type="GO" id="GO:0008237">
    <property type="term" value="F:metallopeptidase activity"/>
    <property type="evidence" value="ECO:0007669"/>
    <property type="project" value="UniProtKB-KW"/>
</dbReference>
<dbReference type="GO" id="GO:0006508">
    <property type="term" value="P:proteolysis"/>
    <property type="evidence" value="ECO:0007669"/>
    <property type="project" value="UniProtKB-KW"/>
</dbReference>
<dbReference type="Gene3D" id="3.40.1830.10">
    <property type="entry name" value="Thermophilic metalloprotease (M29)"/>
    <property type="match status" value="1"/>
</dbReference>
<dbReference type="InterPro" id="IPR052170">
    <property type="entry name" value="M29_Exopeptidase"/>
</dbReference>
<dbReference type="InterPro" id="IPR035097">
    <property type="entry name" value="M29_N-terminal"/>
</dbReference>
<dbReference type="InterPro" id="IPR000787">
    <property type="entry name" value="Peptidase_M29"/>
</dbReference>
<dbReference type="PANTHER" id="PTHR34448">
    <property type="entry name" value="AMINOPEPTIDASE"/>
    <property type="match status" value="1"/>
</dbReference>
<dbReference type="PANTHER" id="PTHR34448:SF3">
    <property type="entry name" value="AMINOPEPTIDASE AMPS"/>
    <property type="match status" value="1"/>
</dbReference>
<dbReference type="Pfam" id="PF02073">
    <property type="entry name" value="Peptidase_M29"/>
    <property type="match status" value="1"/>
</dbReference>
<dbReference type="PRINTS" id="PR00919">
    <property type="entry name" value="THERMOPTASE"/>
</dbReference>
<dbReference type="SUPFAM" id="SSF144052">
    <property type="entry name" value="Thermophilic metalloprotease-like"/>
    <property type="match status" value="1"/>
</dbReference>
<evidence type="ECO:0000250" key="1">
    <source>
        <dbReference type="UniProtKB" id="P42778"/>
    </source>
</evidence>
<evidence type="ECO:0000269" key="2">
    <source>
    </source>
</evidence>
<evidence type="ECO:0000305" key="3"/>
<protein>
    <recommendedName>
        <fullName>Aminopeptidase 2</fullName>
        <ecNumber evidence="2">3.4.11.-</ecNumber>
    </recommendedName>
    <alternativeName>
        <fullName>Aminopeptidase II</fullName>
        <shortName>AP-II</shortName>
    </alternativeName>
</protein>
<comment type="function">
    <text evidence="2">Broad specificity metal-dependent exopeptidase, releasing all N-terminal amino acids.</text>
</comment>
<comment type="cofactor">
    <cofactor evidence="2">
        <name>Co(2+)</name>
        <dbReference type="ChEBI" id="CHEBI:48828"/>
    </cofactor>
    <cofactor evidence="1">
        <name>Zn(2+)</name>
        <dbReference type="ChEBI" id="CHEBI:29105"/>
    </cofactor>
    <cofactor evidence="1">
        <name>Mg(2+)</name>
        <dbReference type="ChEBI" id="CHEBI:18420"/>
    </cofactor>
    <text evidence="1 2">Binds 2 divalent metal cations per subunit (PubMed:938681). Can use cobalt, zinc, and possibly also magnesium ions.</text>
</comment>
<comment type="biophysicochemical properties">
    <temperatureDependence>
        <text evidence="2">Highly thermostable.</text>
    </temperatureDependence>
</comment>
<comment type="subunit">
    <text evidence="2">Homodimer.</text>
</comment>
<comment type="similarity">
    <text evidence="3">Belongs to the peptidase M29 family.</text>
</comment>
<reference key="1">
    <citation type="journal article" date="1997" name="Biosci. Biotechnol. Biochem.">
        <title>Cloning of genes of the aminopeptidase T family from Thermus thermophilus HB8 and Bacillus stearothermophilus NCIB8924: apparent similarity to the leucyl aminopeptidase family.</title>
        <authorList>
            <person name="Motoshima H."/>
            <person name="Minagawa E."/>
            <person name="Tsukasaki F."/>
            <person name="Kaminogawa S."/>
        </authorList>
    </citation>
    <scope>NUCLEOTIDE SEQUENCE [GENOMIC DNA]</scope>
    <source>
        <strain>ATCC 29609 / DSM 2027 / NCA 1503 / NCIMB 8924</strain>
    </source>
</reference>
<reference key="2">
    <citation type="journal article" date="1976" name="Biochim. Biophys. Acta">
        <title>Aminopeptidase II from Bacillus stearothermophilus.</title>
        <authorList>
            <person name="Stoll E."/>
            <person name="Weder H.-G."/>
            <person name="Zuber H."/>
        </authorList>
    </citation>
    <scope>PROTEIN SEQUENCE OF 1-15</scope>
    <scope>FUNCTION</scope>
    <scope>CATALYTIC ACTIVITY</scope>
    <scope>BIOPHYSICOCHEMICAL PROPERTIES</scope>
    <scope>COFACTOR</scope>
    <scope>SUBUNIT</scope>
    <source>
        <strain>ATCC 29609 / DSM 2027 / NCA 1503 / NCIMB 8924</strain>
    </source>
</reference>
<feature type="chain" id="PRO_0000079173" description="Aminopeptidase 2">
    <location>
        <begin position="1"/>
        <end position="413"/>
    </location>
</feature>
<feature type="binding site" evidence="1">
    <location>
        <position position="250"/>
    </location>
    <ligand>
        <name>a divalent metal cation</name>
        <dbReference type="ChEBI" id="CHEBI:60240"/>
        <label>1</label>
    </ligand>
</feature>
<feature type="binding site" evidence="1">
    <location>
        <position position="316"/>
    </location>
    <ligand>
        <name>a divalent metal cation</name>
        <dbReference type="ChEBI" id="CHEBI:60240"/>
        <label>1</label>
    </ligand>
</feature>
<feature type="binding site" evidence="1">
    <location>
        <position position="316"/>
    </location>
    <ligand>
        <name>a divalent metal cation</name>
        <dbReference type="ChEBI" id="CHEBI:60240"/>
        <label>2</label>
    </ligand>
</feature>
<feature type="binding site" evidence="1">
    <location>
        <position position="340"/>
    </location>
    <ligand>
        <name>a divalent metal cation</name>
        <dbReference type="ChEBI" id="CHEBI:60240"/>
        <label>1</label>
    </ligand>
</feature>
<feature type="binding site" evidence="1">
    <location>
        <position position="340"/>
    </location>
    <ligand>
        <name>a divalent metal cation</name>
        <dbReference type="ChEBI" id="CHEBI:60240"/>
        <label>2</label>
    </ligand>
</feature>
<feature type="binding site" evidence="1">
    <location>
        <position position="345"/>
    </location>
    <ligand>
        <name>a divalent metal cation</name>
        <dbReference type="ChEBI" id="CHEBI:60240"/>
        <label>1</label>
    </ligand>
</feature>
<feature type="binding site" evidence="1">
    <location>
        <position position="378"/>
    </location>
    <ligand>
        <name>a divalent metal cation</name>
        <dbReference type="ChEBI" id="CHEBI:60240"/>
        <label>2</label>
    </ligand>
</feature>
<feature type="binding site" evidence="1">
    <location>
        <position position="380"/>
    </location>
    <ligand>
        <name>a divalent metal cation</name>
        <dbReference type="ChEBI" id="CHEBI:60240"/>
        <label>2</label>
    </ligand>
</feature>